<geneLocation type="chloroplast"/>
<protein>
    <recommendedName>
        <fullName evidence="1">DNA-directed RNA polymerase subunit beta'</fullName>
        <ecNumber evidence="1">2.7.7.6</ecNumber>
    </recommendedName>
    <alternativeName>
        <fullName evidence="1">PEP</fullName>
    </alternativeName>
    <alternativeName>
        <fullName evidence="1">Plastid-encoded RNA polymerase subunit beta'</fullName>
        <shortName evidence="1">RNA polymerase subunit beta'</shortName>
    </alternativeName>
</protein>
<feature type="chain" id="PRO_0000067865" description="DNA-directed RNA polymerase subunit beta'">
    <location>
        <begin position="1"/>
        <end position="661"/>
    </location>
</feature>
<feature type="binding site" evidence="1">
    <location>
        <position position="69"/>
    </location>
    <ligand>
        <name>Zn(2+)</name>
        <dbReference type="ChEBI" id="CHEBI:29105"/>
    </ligand>
</feature>
<feature type="binding site" evidence="1">
    <location>
        <position position="71"/>
    </location>
    <ligand>
        <name>Zn(2+)</name>
        <dbReference type="ChEBI" id="CHEBI:29105"/>
    </ligand>
</feature>
<feature type="binding site" evidence="1">
    <location>
        <position position="87"/>
    </location>
    <ligand>
        <name>Zn(2+)</name>
        <dbReference type="ChEBI" id="CHEBI:29105"/>
    </ligand>
</feature>
<feature type="binding site" evidence="1">
    <location>
        <position position="90"/>
    </location>
    <ligand>
        <name>Zn(2+)</name>
        <dbReference type="ChEBI" id="CHEBI:29105"/>
    </ligand>
</feature>
<feature type="binding site" evidence="1">
    <location>
        <position position="489"/>
    </location>
    <ligand>
        <name>Mg(2+)</name>
        <dbReference type="ChEBI" id="CHEBI:18420"/>
    </ligand>
</feature>
<feature type="binding site" evidence="1">
    <location>
        <position position="491"/>
    </location>
    <ligand>
        <name>Mg(2+)</name>
        <dbReference type="ChEBI" id="CHEBI:18420"/>
    </ligand>
</feature>
<feature type="binding site" evidence="1">
    <location>
        <position position="493"/>
    </location>
    <ligand>
        <name>Mg(2+)</name>
        <dbReference type="ChEBI" id="CHEBI:18420"/>
    </ligand>
</feature>
<proteinExistence type="inferred from homology"/>
<evidence type="ECO:0000255" key="1">
    <source>
        <dbReference type="HAMAP-Rule" id="MF_01323"/>
    </source>
</evidence>
<comment type="function">
    <text evidence="1">DNA-dependent RNA polymerase catalyzes the transcription of DNA into RNA using the four ribonucleoside triphosphates as substrates.</text>
</comment>
<comment type="catalytic activity">
    <reaction evidence="1">
        <text>RNA(n) + a ribonucleoside 5'-triphosphate = RNA(n+1) + diphosphate</text>
        <dbReference type="Rhea" id="RHEA:21248"/>
        <dbReference type="Rhea" id="RHEA-COMP:14527"/>
        <dbReference type="Rhea" id="RHEA-COMP:17342"/>
        <dbReference type="ChEBI" id="CHEBI:33019"/>
        <dbReference type="ChEBI" id="CHEBI:61557"/>
        <dbReference type="ChEBI" id="CHEBI:140395"/>
        <dbReference type="EC" id="2.7.7.6"/>
    </reaction>
</comment>
<comment type="cofactor">
    <cofactor evidence="1">
        <name>Mg(2+)</name>
        <dbReference type="ChEBI" id="CHEBI:18420"/>
    </cofactor>
    <text evidence="1">Binds 1 Mg(2+) ion per subunit.</text>
</comment>
<comment type="cofactor">
    <cofactor evidence="1">
        <name>Zn(2+)</name>
        <dbReference type="ChEBI" id="CHEBI:29105"/>
    </cofactor>
    <text evidence="1">Binds 1 Zn(2+) ion per subunit.</text>
</comment>
<comment type="subunit">
    <text evidence="1">In plastids the minimal PEP RNA polymerase catalytic core is composed of four subunits: alpha, beta, beta', and beta''. When a (nuclear-encoded) sigma factor is associated with the core the holoenzyme is formed, which can initiate transcription.</text>
</comment>
<comment type="subcellular location">
    <subcellularLocation>
        <location evidence="1">Plastid</location>
        <location evidence="1">Chloroplast</location>
    </subcellularLocation>
</comment>
<comment type="similarity">
    <text evidence="1">Belongs to the RNA polymerase beta' chain family. RpoC1 subfamily.</text>
</comment>
<dbReference type="EC" id="2.7.7.6" evidence="1"/>
<dbReference type="EMBL" id="AF494278">
    <property type="protein sequence ID" value="AAM96567.1"/>
    <property type="molecule type" value="Genomic_DNA"/>
</dbReference>
<dbReference type="RefSeq" id="NP_683775.1">
    <property type="nucleotide sequence ID" value="NC_004115.1"/>
</dbReference>
<dbReference type="SMR" id="Q8MA11"/>
<dbReference type="GeneID" id="860723"/>
<dbReference type="GO" id="GO:0009507">
    <property type="term" value="C:chloroplast"/>
    <property type="evidence" value="ECO:0007669"/>
    <property type="project" value="UniProtKB-SubCell"/>
</dbReference>
<dbReference type="GO" id="GO:0000428">
    <property type="term" value="C:DNA-directed RNA polymerase complex"/>
    <property type="evidence" value="ECO:0007669"/>
    <property type="project" value="UniProtKB-KW"/>
</dbReference>
<dbReference type="GO" id="GO:0005739">
    <property type="term" value="C:mitochondrion"/>
    <property type="evidence" value="ECO:0007669"/>
    <property type="project" value="GOC"/>
</dbReference>
<dbReference type="GO" id="GO:0003677">
    <property type="term" value="F:DNA binding"/>
    <property type="evidence" value="ECO:0007669"/>
    <property type="project" value="UniProtKB-UniRule"/>
</dbReference>
<dbReference type="GO" id="GO:0003899">
    <property type="term" value="F:DNA-directed RNA polymerase activity"/>
    <property type="evidence" value="ECO:0007669"/>
    <property type="project" value="UniProtKB-UniRule"/>
</dbReference>
<dbReference type="GO" id="GO:0000287">
    <property type="term" value="F:magnesium ion binding"/>
    <property type="evidence" value="ECO:0007669"/>
    <property type="project" value="UniProtKB-UniRule"/>
</dbReference>
<dbReference type="GO" id="GO:0008270">
    <property type="term" value="F:zinc ion binding"/>
    <property type="evidence" value="ECO:0007669"/>
    <property type="project" value="UniProtKB-UniRule"/>
</dbReference>
<dbReference type="GO" id="GO:0006351">
    <property type="term" value="P:DNA-templated transcription"/>
    <property type="evidence" value="ECO:0007669"/>
    <property type="project" value="UniProtKB-UniRule"/>
</dbReference>
<dbReference type="Gene3D" id="1.10.40.90">
    <property type="match status" value="1"/>
</dbReference>
<dbReference type="Gene3D" id="2.40.40.20">
    <property type="match status" value="1"/>
</dbReference>
<dbReference type="Gene3D" id="4.10.860.120">
    <property type="entry name" value="RNA polymerase II, clamp domain"/>
    <property type="match status" value="1"/>
</dbReference>
<dbReference type="Gene3D" id="1.10.274.100">
    <property type="entry name" value="RNA polymerase Rpb1, domain 3"/>
    <property type="match status" value="1"/>
</dbReference>
<dbReference type="HAMAP" id="MF_01323">
    <property type="entry name" value="RNApol_bact_RpoC1"/>
    <property type="match status" value="1"/>
</dbReference>
<dbReference type="InterPro" id="IPR045867">
    <property type="entry name" value="DNA-dir_RpoC_beta_prime"/>
</dbReference>
<dbReference type="InterPro" id="IPR000722">
    <property type="entry name" value="RNA_pol_asu"/>
</dbReference>
<dbReference type="InterPro" id="IPR006592">
    <property type="entry name" value="RNA_pol_N"/>
</dbReference>
<dbReference type="InterPro" id="IPR007080">
    <property type="entry name" value="RNA_pol_Rpb1_1"/>
</dbReference>
<dbReference type="InterPro" id="IPR007066">
    <property type="entry name" value="RNA_pol_Rpb1_3"/>
</dbReference>
<dbReference type="InterPro" id="IPR042102">
    <property type="entry name" value="RNA_pol_Rpb1_3_sf"/>
</dbReference>
<dbReference type="InterPro" id="IPR044893">
    <property type="entry name" value="RNA_pol_Rpb1_clamp_domain"/>
</dbReference>
<dbReference type="InterPro" id="IPR034678">
    <property type="entry name" value="RNApol_RpoC1"/>
</dbReference>
<dbReference type="PANTHER" id="PTHR19376">
    <property type="entry name" value="DNA-DIRECTED RNA POLYMERASE"/>
    <property type="match status" value="1"/>
</dbReference>
<dbReference type="PANTHER" id="PTHR19376:SF54">
    <property type="entry name" value="DNA-DIRECTED RNA POLYMERASE SUBUNIT BETA"/>
    <property type="match status" value="1"/>
</dbReference>
<dbReference type="Pfam" id="PF04997">
    <property type="entry name" value="RNA_pol_Rpb1_1"/>
    <property type="match status" value="1"/>
</dbReference>
<dbReference type="Pfam" id="PF00623">
    <property type="entry name" value="RNA_pol_Rpb1_2"/>
    <property type="match status" value="1"/>
</dbReference>
<dbReference type="Pfam" id="PF04983">
    <property type="entry name" value="RNA_pol_Rpb1_3"/>
    <property type="match status" value="1"/>
</dbReference>
<dbReference type="SMART" id="SM00663">
    <property type="entry name" value="RPOLA_N"/>
    <property type="match status" value="1"/>
</dbReference>
<dbReference type="SUPFAM" id="SSF64484">
    <property type="entry name" value="beta and beta-prime subunits of DNA dependent RNA-polymerase"/>
    <property type="match status" value="1"/>
</dbReference>
<keyword id="KW-0150">Chloroplast</keyword>
<keyword id="KW-0240">DNA-directed RNA polymerase</keyword>
<keyword id="KW-0460">Magnesium</keyword>
<keyword id="KW-0479">Metal-binding</keyword>
<keyword id="KW-0548">Nucleotidyltransferase</keyword>
<keyword id="KW-0934">Plastid</keyword>
<keyword id="KW-0804">Transcription</keyword>
<keyword id="KW-0808">Transferase</keyword>
<keyword id="KW-0862">Zinc</keyword>
<accession>Q8MA11</accession>
<reference key="1">
    <citation type="journal article" date="2002" name="Proc. Natl. Acad. Sci. U.S.A.">
        <title>The chloroplast and mitochondrial genome sequences of the charophyte Chaetosphaeridium globosum: insights into the timing of the events that restructured organelle DNAs within the green algal lineage that led to land plants.</title>
        <authorList>
            <person name="Turmel M."/>
            <person name="Otis C."/>
            <person name="Lemieux C."/>
        </authorList>
    </citation>
    <scope>NUCLEOTIDE SEQUENCE [LARGE SCALE GENOMIC DNA]</scope>
</reference>
<organism>
    <name type="scientific">Chaetosphaeridium globosum</name>
    <name type="common">Charophycean green alga</name>
    <name type="synonym">Herposteiron globosum</name>
    <dbReference type="NCBI Taxonomy" id="96477"/>
    <lineage>
        <taxon>Eukaryota</taxon>
        <taxon>Viridiplantae</taxon>
        <taxon>Streptophyta</taxon>
        <taxon>Coleochaetophyceae</taxon>
        <taxon>Coleochaetales</taxon>
        <taxon>Chaetosphaeridiaceae</taxon>
        <taxon>Chaetosphaeridium</taxon>
    </lineage>
</organism>
<gene>
    <name evidence="1" type="primary">rpoC1</name>
</gene>
<name>RPOC1_CHAGL</name>
<sequence>MFDKQKNRYIRVELASPDQIRNWAERTLPNGEIVGKVTKPYTLHYNSHKPEKDGLFCERIFGPIKSGICACGKYHGFVKNLPEVKFCKQCGVEFTDSKVRRYRMGYIQLAYPATHIWYLKRLPSHIATLLKMSLKEVESLVYCDLFLPRPIIKKPNLLKVKKLFNYDDQLWKETLPRFFSTRSFESFQNREMATGGDAIHKRLSSLNLQKLIFQSYNEWEKLSLQRSTGNSYEDKKIQRMKDIIIRRIKLAKQFFENNIKPEWMVLSVLPVLPPELRPMIEINQGELITSDLNELYRRVIYRNNTLIGFLNKSNSTPAGLIIYQKRLVQEAVDALIDNRIGNQIMKDRNNRPYKSFSEIIEGKEGRFRQDLLGKRVDYSGRSVIVVGPSLSLHQCGIPKDMAIELFQPFIIRDLINCQLAPNLRAARSMIQNQEPIIFKILEKIIKNHPILLNRAPTLHRLGIQAFQPILVEGLAIRLHPLVCGGFNADFDGDQMAVHIPLSLEAQAEARFLMLANSNLLSPANGEPITVPSQDMLLGLYVLTMSCKQGIYIYNEQKLKKKIPYFCNYIDVITAYEKKQINLHDPIWLKWYGNLRGTSSTKKQKLFEIQCESRGTRRKIFENWHFCENIRNRKFTIYLFTTPGRIIFNQLLEQSIQATVRI</sequence>